<proteinExistence type="inferred from homology"/>
<comment type="function">
    <text evidence="1">One of the primary rRNA binding proteins, it binds directly to 16S rRNA central domain where it helps coordinate assembly of the platform of the 30S subunit.</text>
</comment>
<comment type="subunit">
    <text evidence="1">Part of the 30S ribosomal subunit.</text>
</comment>
<comment type="subcellular location">
    <subcellularLocation>
        <location>Plastid</location>
        <location>Chloroplast</location>
    </subcellularLocation>
</comment>
<comment type="similarity">
    <text evidence="2">Belongs to the universal ribosomal protein uS8 family.</text>
</comment>
<geneLocation type="chloroplast"/>
<dbReference type="EMBL" id="DQ383815">
    <property type="protein sequence ID" value="ABD47181.1"/>
    <property type="molecule type" value="Genomic_DNA"/>
</dbReference>
<dbReference type="RefSeq" id="YP_588153.1">
    <property type="nucleotide sequence ID" value="NC_007977.1"/>
</dbReference>
<dbReference type="SMR" id="Q1KXS3"/>
<dbReference type="EnsemblPlants" id="mRNA:HanXRQr2_Chr17g0785331">
    <property type="protein sequence ID" value="CDS:HanXRQr2_Chr17g0785331.1"/>
    <property type="gene ID" value="HanXRQr2_Chr17g0785331"/>
</dbReference>
<dbReference type="GeneID" id="4055695"/>
<dbReference type="Gramene" id="mRNA:HanXRQr2_Chr17g0785331">
    <property type="protein sequence ID" value="CDS:HanXRQr2_Chr17g0785331.1"/>
    <property type="gene ID" value="HanXRQr2_Chr17g0785331"/>
</dbReference>
<dbReference type="KEGG" id="han:4055695"/>
<dbReference type="OrthoDB" id="409928at2759"/>
<dbReference type="GO" id="GO:0009507">
    <property type="term" value="C:chloroplast"/>
    <property type="evidence" value="ECO:0007669"/>
    <property type="project" value="UniProtKB-SubCell"/>
</dbReference>
<dbReference type="GO" id="GO:1990904">
    <property type="term" value="C:ribonucleoprotein complex"/>
    <property type="evidence" value="ECO:0007669"/>
    <property type="project" value="UniProtKB-KW"/>
</dbReference>
<dbReference type="GO" id="GO:0005840">
    <property type="term" value="C:ribosome"/>
    <property type="evidence" value="ECO:0007669"/>
    <property type="project" value="UniProtKB-KW"/>
</dbReference>
<dbReference type="GO" id="GO:0019843">
    <property type="term" value="F:rRNA binding"/>
    <property type="evidence" value="ECO:0007669"/>
    <property type="project" value="UniProtKB-UniRule"/>
</dbReference>
<dbReference type="GO" id="GO:0003735">
    <property type="term" value="F:structural constituent of ribosome"/>
    <property type="evidence" value="ECO:0007669"/>
    <property type="project" value="InterPro"/>
</dbReference>
<dbReference type="GO" id="GO:0006412">
    <property type="term" value="P:translation"/>
    <property type="evidence" value="ECO:0007669"/>
    <property type="project" value="UniProtKB-UniRule"/>
</dbReference>
<dbReference type="FunFam" id="3.30.1490.10:FF:000001">
    <property type="entry name" value="30S ribosomal protein S8"/>
    <property type="match status" value="1"/>
</dbReference>
<dbReference type="Gene3D" id="3.30.1370.30">
    <property type="match status" value="1"/>
</dbReference>
<dbReference type="Gene3D" id="3.30.1490.10">
    <property type="match status" value="1"/>
</dbReference>
<dbReference type="HAMAP" id="MF_01302_B">
    <property type="entry name" value="Ribosomal_uS8_B"/>
    <property type="match status" value="1"/>
</dbReference>
<dbReference type="InterPro" id="IPR000630">
    <property type="entry name" value="Ribosomal_uS8"/>
</dbReference>
<dbReference type="InterPro" id="IPR047863">
    <property type="entry name" value="Ribosomal_uS8_CS"/>
</dbReference>
<dbReference type="InterPro" id="IPR035987">
    <property type="entry name" value="Ribosomal_uS8_sf"/>
</dbReference>
<dbReference type="NCBIfam" id="NF001109">
    <property type="entry name" value="PRK00136.1"/>
    <property type="match status" value="1"/>
</dbReference>
<dbReference type="PANTHER" id="PTHR11758">
    <property type="entry name" value="40S RIBOSOMAL PROTEIN S15A"/>
    <property type="match status" value="1"/>
</dbReference>
<dbReference type="Pfam" id="PF00410">
    <property type="entry name" value="Ribosomal_S8"/>
    <property type="match status" value="1"/>
</dbReference>
<dbReference type="SUPFAM" id="SSF56047">
    <property type="entry name" value="Ribosomal protein S8"/>
    <property type="match status" value="1"/>
</dbReference>
<dbReference type="PROSITE" id="PS00053">
    <property type="entry name" value="RIBOSOMAL_S8"/>
    <property type="match status" value="1"/>
</dbReference>
<sequence>MSSDTIADIITSIRNADMYRKSVVRVASTNISQSIVKILLREGFIENVRKHRENNKDFLVLTLRHRRNRKRPYRNLLNLKRISRPGLRIYSNYQRIPRILGGMGVVILSTSRGIMTDREARLERIGGEILCYIW</sequence>
<protein>
    <recommendedName>
        <fullName evidence="2">Small ribosomal subunit protein uS8c</fullName>
    </recommendedName>
    <alternativeName>
        <fullName>30S ribosomal protein S8, chloroplastic</fullName>
    </alternativeName>
</protein>
<name>RR8_HELAN</name>
<accession>Q1KXS3</accession>
<reference key="1">
    <citation type="submission" date="2006-01" db="EMBL/GenBank/DDBJ databases">
        <title>A comparison of the first two published chloroplast genomes in Asteraceae: Lactuca and Helianthus.</title>
        <authorList>
            <person name="Timme R.E."/>
            <person name="Kuehl J.V."/>
            <person name="Boore J.L."/>
            <person name="Jansen R.K."/>
        </authorList>
    </citation>
    <scope>NUCLEOTIDE SEQUENCE [LARGE SCALE GENOMIC DNA]</scope>
    <source>
        <strain>cv. HA383</strain>
    </source>
</reference>
<keyword id="KW-0150">Chloroplast</keyword>
<keyword id="KW-0934">Plastid</keyword>
<keyword id="KW-0687">Ribonucleoprotein</keyword>
<keyword id="KW-0689">Ribosomal protein</keyword>
<keyword id="KW-0694">RNA-binding</keyword>
<keyword id="KW-0699">rRNA-binding</keyword>
<feature type="chain" id="PRO_0000276723" description="Small ribosomal subunit protein uS8c">
    <location>
        <begin position="1"/>
        <end position="134"/>
    </location>
</feature>
<evidence type="ECO:0000250" key="1"/>
<evidence type="ECO:0000305" key="2"/>
<gene>
    <name type="primary">rps8</name>
</gene>
<organism>
    <name type="scientific">Helianthus annuus</name>
    <name type="common">Common sunflower</name>
    <dbReference type="NCBI Taxonomy" id="4232"/>
    <lineage>
        <taxon>Eukaryota</taxon>
        <taxon>Viridiplantae</taxon>
        <taxon>Streptophyta</taxon>
        <taxon>Embryophyta</taxon>
        <taxon>Tracheophyta</taxon>
        <taxon>Spermatophyta</taxon>
        <taxon>Magnoliopsida</taxon>
        <taxon>eudicotyledons</taxon>
        <taxon>Gunneridae</taxon>
        <taxon>Pentapetalae</taxon>
        <taxon>asterids</taxon>
        <taxon>campanulids</taxon>
        <taxon>Asterales</taxon>
        <taxon>Asteraceae</taxon>
        <taxon>Asteroideae</taxon>
        <taxon>Heliantheae alliance</taxon>
        <taxon>Heliantheae</taxon>
        <taxon>Helianthus</taxon>
    </lineage>
</organism>